<protein>
    <recommendedName>
        <fullName evidence="1">Heat-inducible transcription repressor HrcA</fullName>
    </recommendedName>
</protein>
<evidence type="ECO:0000255" key="1">
    <source>
        <dbReference type="HAMAP-Rule" id="MF_00081"/>
    </source>
</evidence>
<sequence length="359" mass="39413">MVLRNPEKKGIASTLDERSGEIFRRIVETYLESGEPLGSRNLSRLLPMSLSPASVRNVMSDLEDLGLIYSPHVSAGRLPTQTGLRFFVDAFMQVGNLSAEERTSIERQVRRADRDQPIDSLLAEASQMLSGMSRGAGLVITTKSDPVLKHVEFIRLAPTKALAVLVGDHDQVENRIIELPAGITSAQLTEAANFVNAHLAGQTIPELRSQLEKVKETVRGELDALSQDLVERGLAIWSGSEGDEKPARLIVRGRANLLEGLEGTEDIERLRMLFDDLEKKDSLIELLDLAESGPGVRIFIGSENKLFSLSGSSLIVAPYRDSDDRIVGAVGVIGPTRLNYSRIVPMVDYTAQLMSRLSR</sequence>
<name>HRCA_SINFN</name>
<organism>
    <name type="scientific">Sinorhizobium fredii (strain NBRC 101917 / NGR234)</name>
    <dbReference type="NCBI Taxonomy" id="394"/>
    <lineage>
        <taxon>Bacteria</taxon>
        <taxon>Pseudomonadati</taxon>
        <taxon>Pseudomonadota</taxon>
        <taxon>Alphaproteobacteria</taxon>
        <taxon>Hyphomicrobiales</taxon>
        <taxon>Rhizobiaceae</taxon>
        <taxon>Sinorhizobium/Ensifer group</taxon>
        <taxon>Sinorhizobium</taxon>
    </lineage>
</organism>
<keyword id="KW-1185">Reference proteome</keyword>
<keyword id="KW-0678">Repressor</keyword>
<keyword id="KW-0346">Stress response</keyword>
<keyword id="KW-0804">Transcription</keyword>
<keyword id="KW-0805">Transcription regulation</keyword>
<feature type="chain" id="PRO_1000118312" description="Heat-inducible transcription repressor HrcA">
    <location>
        <begin position="1"/>
        <end position="359"/>
    </location>
</feature>
<gene>
    <name evidence="1" type="primary">hrcA</name>
    <name type="ordered locus">NGR_c00110</name>
</gene>
<proteinExistence type="inferred from homology"/>
<comment type="function">
    <text evidence="1">Negative regulator of class I heat shock genes (grpE-dnaK-dnaJ and groELS operons). Prevents heat-shock induction of these operons.</text>
</comment>
<comment type="similarity">
    <text evidence="1">Belongs to the HrcA family.</text>
</comment>
<reference key="1">
    <citation type="journal article" date="2009" name="Appl. Environ. Microbiol.">
        <title>Rhizobium sp. strain NGR234 possesses a remarkable number of secretion systems.</title>
        <authorList>
            <person name="Schmeisser C."/>
            <person name="Liesegang H."/>
            <person name="Krysciak D."/>
            <person name="Bakkou N."/>
            <person name="Le Quere A."/>
            <person name="Wollherr A."/>
            <person name="Heinemeyer I."/>
            <person name="Morgenstern B."/>
            <person name="Pommerening-Roeser A."/>
            <person name="Flores M."/>
            <person name="Palacios R."/>
            <person name="Brenner S."/>
            <person name="Gottschalk G."/>
            <person name="Schmitz R.A."/>
            <person name="Broughton W.J."/>
            <person name="Perret X."/>
            <person name="Strittmatter A.W."/>
            <person name="Streit W.R."/>
        </authorList>
    </citation>
    <scope>NUCLEOTIDE SEQUENCE [LARGE SCALE GENOMIC DNA]</scope>
    <source>
        <strain>NBRC 101917 / NGR234</strain>
    </source>
</reference>
<accession>C3MEJ2</accession>
<dbReference type="EMBL" id="CP001389">
    <property type="protein sequence ID" value="ACP23815.1"/>
    <property type="molecule type" value="Genomic_DNA"/>
</dbReference>
<dbReference type="RefSeq" id="WP_012706600.1">
    <property type="nucleotide sequence ID" value="NC_012587.1"/>
</dbReference>
<dbReference type="RefSeq" id="YP_002824568.1">
    <property type="nucleotide sequence ID" value="NC_012587.1"/>
</dbReference>
<dbReference type="SMR" id="C3MEJ2"/>
<dbReference type="STRING" id="394.NGR_c00110"/>
<dbReference type="KEGG" id="rhi:NGR_c00110"/>
<dbReference type="PATRIC" id="fig|394.7.peg.2801"/>
<dbReference type="eggNOG" id="COG1420">
    <property type="taxonomic scope" value="Bacteria"/>
</dbReference>
<dbReference type="HOGENOM" id="CLU_050019_0_0_5"/>
<dbReference type="OrthoDB" id="9783139at2"/>
<dbReference type="Proteomes" id="UP000001054">
    <property type="component" value="Chromosome"/>
</dbReference>
<dbReference type="GO" id="GO:0003677">
    <property type="term" value="F:DNA binding"/>
    <property type="evidence" value="ECO:0007669"/>
    <property type="project" value="InterPro"/>
</dbReference>
<dbReference type="GO" id="GO:0045892">
    <property type="term" value="P:negative regulation of DNA-templated transcription"/>
    <property type="evidence" value="ECO:0007669"/>
    <property type="project" value="UniProtKB-UniRule"/>
</dbReference>
<dbReference type="Gene3D" id="3.30.450.40">
    <property type="match status" value="1"/>
</dbReference>
<dbReference type="Gene3D" id="3.30.390.60">
    <property type="entry name" value="Heat-inducible transcription repressor hrca homolog, domain 3"/>
    <property type="match status" value="1"/>
</dbReference>
<dbReference type="Gene3D" id="1.10.10.10">
    <property type="entry name" value="Winged helix-like DNA-binding domain superfamily/Winged helix DNA-binding domain"/>
    <property type="match status" value="1"/>
</dbReference>
<dbReference type="HAMAP" id="MF_00081">
    <property type="entry name" value="HrcA"/>
    <property type="match status" value="1"/>
</dbReference>
<dbReference type="InterPro" id="IPR029016">
    <property type="entry name" value="GAF-like_dom_sf"/>
</dbReference>
<dbReference type="InterPro" id="IPR002571">
    <property type="entry name" value="HrcA"/>
</dbReference>
<dbReference type="InterPro" id="IPR021153">
    <property type="entry name" value="HrcA_C"/>
</dbReference>
<dbReference type="InterPro" id="IPR036388">
    <property type="entry name" value="WH-like_DNA-bd_sf"/>
</dbReference>
<dbReference type="InterPro" id="IPR036390">
    <property type="entry name" value="WH_DNA-bd_sf"/>
</dbReference>
<dbReference type="InterPro" id="IPR023120">
    <property type="entry name" value="WHTH_transcript_rep_HrcA_IDD"/>
</dbReference>
<dbReference type="NCBIfam" id="TIGR00331">
    <property type="entry name" value="hrcA"/>
    <property type="match status" value="1"/>
</dbReference>
<dbReference type="PANTHER" id="PTHR34824">
    <property type="entry name" value="HEAT-INDUCIBLE TRANSCRIPTION REPRESSOR HRCA"/>
    <property type="match status" value="1"/>
</dbReference>
<dbReference type="PANTHER" id="PTHR34824:SF1">
    <property type="entry name" value="HEAT-INDUCIBLE TRANSCRIPTION REPRESSOR HRCA"/>
    <property type="match status" value="1"/>
</dbReference>
<dbReference type="Pfam" id="PF01628">
    <property type="entry name" value="HrcA"/>
    <property type="match status" value="1"/>
</dbReference>
<dbReference type="PIRSF" id="PIRSF005485">
    <property type="entry name" value="HrcA"/>
    <property type="match status" value="1"/>
</dbReference>
<dbReference type="SUPFAM" id="SSF55781">
    <property type="entry name" value="GAF domain-like"/>
    <property type="match status" value="1"/>
</dbReference>
<dbReference type="SUPFAM" id="SSF46785">
    <property type="entry name" value="Winged helix' DNA-binding domain"/>
    <property type="match status" value="1"/>
</dbReference>